<dbReference type="EC" id="2.1.2.10" evidence="1"/>
<dbReference type="EMBL" id="CP000802">
    <property type="protein sequence ID" value="ABV07300.1"/>
    <property type="molecule type" value="Genomic_DNA"/>
</dbReference>
<dbReference type="RefSeq" id="WP_000068701.1">
    <property type="nucleotide sequence ID" value="NC_009800.1"/>
</dbReference>
<dbReference type="SMR" id="A8A446"/>
<dbReference type="GeneID" id="75205258"/>
<dbReference type="KEGG" id="ecx:EcHS_A3064"/>
<dbReference type="HOGENOM" id="CLU_007884_10_2_6"/>
<dbReference type="GO" id="GO:0005829">
    <property type="term" value="C:cytosol"/>
    <property type="evidence" value="ECO:0007669"/>
    <property type="project" value="TreeGrafter"/>
</dbReference>
<dbReference type="GO" id="GO:0005960">
    <property type="term" value="C:glycine cleavage complex"/>
    <property type="evidence" value="ECO:0007669"/>
    <property type="project" value="InterPro"/>
</dbReference>
<dbReference type="GO" id="GO:0004047">
    <property type="term" value="F:aminomethyltransferase activity"/>
    <property type="evidence" value="ECO:0007669"/>
    <property type="project" value="UniProtKB-UniRule"/>
</dbReference>
<dbReference type="GO" id="GO:0008483">
    <property type="term" value="F:transaminase activity"/>
    <property type="evidence" value="ECO:0007669"/>
    <property type="project" value="UniProtKB-KW"/>
</dbReference>
<dbReference type="GO" id="GO:0019464">
    <property type="term" value="P:glycine decarboxylation via glycine cleavage system"/>
    <property type="evidence" value="ECO:0007669"/>
    <property type="project" value="UniProtKB-UniRule"/>
</dbReference>
<dbReference type="FunFam" id="2.40.30.110:FF:000001">
    <property type="entry name" value="Aminomethyltransferase"/>
    <property type="match status" value="1"/>
</dbReference>
<dbReference type="FunFam" id="3.30.70.1400:FF:000001">
    <property type="entry name" value="Aminomethyltransferase"/>
    <property type="match status" value="1"/>
</dbReference>
<dbReference type="FunFam" id="4.10.1250.10:FF:000001">
    <property type="entry name" value="Aminomethyltransferase"/>
    <property type="match status" value="1"/>
</dbReference>
<dbReference type="Gene3D" id="2.40.30.110">
    <property type="entry name" value="Aminomethyltransferase beta-barrel domains"/>
    <property type="match status" value="1"/>
</dbReference>
<dbReference type="Gene3D" id="3.30.70.1400">
    <property type="entry name" value="Aminomethyltransferase beta-barrel domains"/>
    <property type="match status" value="1"/>
</dbReference>
<dbReference type="Gene3D" id="4.10.1250.10">
    <property type="entry name" value="Aminomethyltransferase fragment"/>
    <property type="match status" value="1"/>
</dbReference>
<dbReference type="Gene3D" id="3.30.1360.120">
    <property type="entry name" value="Probable tRNA modification gtpase trme, domain 1"/>
    <property type="match status" value="1"/>
</dbReference>
<dbReference type="HAMAP" id="MF_00259">
    <property type="entry name" value="GcvT"/>
    <property type="match status" value="1"/>
</dbReference>
<dbReference type="InterPro" id="IPR006223">
    <property type="entry name" value="GCS_T"/>
</dbReference>
<dbReference type="InterPro" id="IPR022903">
    <property type="entry name" value="GCS_T_bac"/>
</dbReference>
<dbReference type="InterPro" id="IPR013977">
    <property type="entry name" value="GCST_C"/>
</dbReference>
<dbReference type="InterPro" id="IPR006222">
    <property type="entry name" value="GCV_T_N"/>
</dbReference>
<dbReference type="InterPro" id="IPR028896">
    <property type="entry name" value="GcvT/YgfZ/DmdA"/>
</dbReference>
<dbReference type="InterPro" id="IPR029043">
    <property type="entry name" value="GcvT/YgfZ_C"/>
</dbReference>
<dbReference type="InterPro" id="IPR027266">
    <property type="entry name" value="TrmE/GcvT_dom1"/>
</dbReference>
<dbReference type="NCBIfam" id="TIGR00528">
    <property type="entry name" value="gcvT"/>
    <property type="match status" value="1"/>
</dbReference>
<dbReference type="NCBIfam" id="NF001567">
    <property type="entry name" value="PRK00389.1"/>
    <property type="match status" value="1"/>
</dbReference>
<dbReference type="PANTHER" id="PTHR43757">
    <property type="entry name" value="AMINOMETHYLTRANSFERASE"/>
    <property type="match status" value="1"/>
</dbReference>
<dbReference type="PANTHER" id="PTHR43757:SF2">
    <property type="entry name" value="AMINOMETHYLTRANSFERASE, MITOCHONDRIAL"/>
    <property type="match status" value="1"/>
</dbReference>
<dbReference type="Pfam" id="PF01571">
    <property type="entry name" value="GCV_T"/>
    <property type="match status" value="1"/>
</dbReference>
<dbReference type="Pfam" id="PF08669">
    <property type="entry name" value="GCV_T_C"/>
    <property type="match status" value="1"/>
</dbReference>
<dbReference type="PIRSF" id="PIRSF006487">
    <property type="entry name" value="GcvT"/>
    <property type="match status" value="1"/>
</dbReference>
<dbReference type="SUPFAM" id="SSF101790">
    <property type="entry name" value="Aminomethyltransferase beta-barrel domain"/>
    <property type="match status" value="1"/>
</dbReference>
<dbReference type="SUPFAM" id="SSF103025">
    <property type="entry name" value="Folate-binding domain"/>
    <property type="match status" value="1"/>
</dbReference>
<comment type="function">
    <text evidence="1">The glycine cleavage system catalyzes the degradation of glycine.</text>
</comment>
<comment type="catalytic activity">
    <reaction evidence="1">
        <text>N(6)-[(R)-S(8)-aminomethyldihydrolipoyl]-L-lysyl-[protein] + (6S)-5,6,7,8-tetrahydrofolate = N(6)-[(R)-dihydrolipoyl]-L-lysyl-[protein] + (6R)-5,10-methylene-5,6,7,8-tetrahydrofolate + NH4(+)</text>
        <dbReference type="Rhea" id="RHEA:16945"/>
        <dbReference type="Rhea" id="RHEA-COMP:10475"/>
        <dbReference type="Rhea" id="RHEA-COMP:10492"/>
        <dbReference type="ChEBI" id="CHEBI:15636"/>
        <dbReference type="ChEBI" id="CHEBI:28938"/>
        <dbReference type="ChEBI" id="CHEBI:57453"/>
        <dbReference type="ChEBI" id="CHEBI:83100"/>
        <dbReference type="ChEBI" id="CHEBI:83143"/>
        <dbReference type="EC" id="2.1.2.10"/>
    </reaction>
</comment>
<comment type="subunit">
    <text evidence="1">The glycine cleavage system is composed of four proteins: P, T, L and H.</text>
</comment>
<comment type="similarity">
    <text evidence="1">Belongs to the GcvT family.</text>
</comment>
<gene>
    <name evidence="1" type="primary">gcvT</name>
    <name type="ordered locus">EcHS_A3064</name>
</gene>
<protein>
    <recommendedName>
        <fullName evidence="1">Aminomethyltransferase</fullName>
        <ecNumber evidence="1">2.1.2.10</ecNumber>
    </recommendedName>
    <alternativeName>
        <fullName evidence="1">Glycine cleavage system T protein</fullName>
    </alternativeName>
</protein>
<accession>A8A446</accession>
<evidence type="ECO:0000255" key="1">
    <source>
        <dbReference type="HAMAP-Rule" id="MF_00259"/>
    </source>
</evidence>
<organism>
    <name type="scientific">Escherichia coli O9:H4 (strain HS)</name>
    <dbReference type="NCBI Taxonomy" id="331112"/>
    <lineage>
        <taxon>Bacteria</taxon>
        <taxon>Pseudomonadati</taxon>
        <taxon>Pseudomonadota</taxon>
        <taxon>Gammaproteobacteria</taxon>
        <taxon>Enterobacterales</taxon>
        <taxon>Enterobacteriaceae</taxon>
        <taxon>Escherichia</taxon>
    </lineage>
</organism>
<feature type="chain" id="PRO_1000059085" description="Aminomethyltransferase">
    <location>
        <begin position="1"/>
        <end position="364"/>
    </location>
</feature>
<keyword id="KW-0032">Aminotransferase</keyword>
<keyword id="KW-0808">Transferase</keyword>
<proteinExistence type="inferred from homology"/>
<reference key="1">
    <citation type="journal article" date="2008" name="J. Bacteriol.">
        <title>The pangenome structure of Escherichia coli: comparative genomic analysis of E. coli commensal and pathogenic isolates.</title>
        <authorList>
            <person name="Rasko D.A."/>
            <person name="Rosovitz M.J."/>
            <person name="Myers G.S.A."/>
            <person name="Mongodin E.F."/>
            <person name="Fricke W.F."/>
            <person name="Gajer P."/>
            <person name="Crabtree J."/>
            <person name="Sebaihia M."/>
            <person name="Thomson N.R."/>
            <person name="Chaudhuri R."/>
            <person name="Henderson I.R."/>
            <person name="Sperandio V."/>
            <person name="Ravel J."/>
        </authorList>
    </citation>
    <scope>NUCLEOTIDE SEQUENCE [LARGE SCALE GENOMIC DNA]</scope>
    <source>
        <strain>HS</strain>
    </source>
</reference>
<sequence length="364" mass="40147">MAQQTPLYEQHTLCGARMVDFHGWMMPLHYGSQIDEHHAVRTDAGMFDVSHMTIVDLRGSRTREFLRYLLANDVAKLTKSGKALYSGMLNASGGVIDDLIVYYFTEDFFRLVVNSATREKDLSWITQHAEPFGIEITVRDDLSMIAVQGPNAQAKAATLFNDAQRQAVEGMKPFFGVQAGDLFIATTGYTGEAGYEIALPNEKAADFWRALVEAGVKPCGLGARDTLRLEAGMNLYGQEMDETISPLAANMGWTIAWEPADRDFIGREALEVQREHGTEKLVGLVMTEKGVLRNELPVRFTDAQGNQHEGIITSGTFSPTLGYSIALARVPEGIGETAIVQIRNREMPVKVTKPVFVRNGKAVA</sequence>
<name>GCST_ECOHS</name>